<accession>A6ZPY9</accession>
<reference key="1">
    <citation type="journal article" date="2007" name="Proc. Natl. Acad. Sci. U.S.A.">
        <title>Genome sequencing and comparative analysis of Saccharomyces cerevisiae strain YJM789.</title>
        <authorList>
            <person name="Wei W."/>
            <person name="McCusker J.H."/>
            <person name="Hyman R.W."/>
            <person name="Jones T."/>
            <person name="Ning Y."/>
            <person name="Cao Z."/>
            <person name="Gu Z."/>
            <person name="Bruno D."/>
            <person name="Miranda M."/>
            <person name="Nguyen M."/>
            <person name="Wilhelmy J."/>
            <person name="Komp C."/>
            <person name="Tamse R."/>
            <person name="Wang X."/>
            <person name="Jia P."/>
            <person name="Luedi P."/>
            <person name="Oefner P.J."/>
            <person name="David L."/>
            <person name="Dietrich F.S."/>
            <person name="Li Y."/>
            <person name="Davis R.W."/>
            <person name="Steinmetz L.M."/>
        </authorList>
    </citation>
    <scope>NUCLEOTIDE SEQUENCE [LARGE SCALE GENOMIC DNA]</scope>
    <source>
        <strain>YJM789</strain>
    </source>
</reference>
<dbReference type="EC" id="4.2.1.109" evidence="1"/>
<dbReference type="EMBL" id="AAFW02000040">
    <property type="protein sequence ID" value="EDN63349.1"/>
    <property type="molecule type" value="Genomic_DNA"/>
</dbReference>
<dbReference type="SMR" id="A6ZPY9"/>
<dbReference type="HOGENOM" id="CLU_006033_4_0_1"/>
<dbReference type="UniPathway" id="UPA00904">
    <property type="reaction ID" value="UER00875"/>
</dbReference>
<dbReference type="Proteomes" id="UP000007060">
    <property type="component" value="Unassembled WGS sequence"/>
</dbReference>
<dbReference type="GO" id="GO:0005737">
    <property type="term" value="C:cytoplasm"/>
    <property type="evidence" value="ECO:0007669"/>
    <property type="project" value="UniProtKB-SubCell"/>
</dbReference>
<dbReference type="GO" id="GO:0046570">
    <property type="term" value="F:methylthioribulose 1-phosphate dehydratase activity"/>
    <property type="evidence" value="ECO:0007669"/>
    <property type="project" value="UniProtKB-UniRule"/>
</dbReference>
<dbReference type="GO" id="GO:0008270">
    <property type="term" value="F:zinc ion binding"/>
    <property type="evidence" value="ECO:0007669"/>
    <property type="project" value="UniProtKB-UniRule"/>
</dbReference>
<dbReference type="GO" id="GO:0019509">
    <property type="term" value="P:L-methionine salvage from methylthioadenosine"/>
    <property type="evidence" value="ECO:0007669"/>
    <property type="project" value="UniProtKB-UniRule"/>
</dbReference>
<dbReference type="CDD" id="cd00398">
    <property type="entry name" value="Aldolase_II"/>
    <property type="match status" value="1"/>
</dbReference>
<dbReference type="FunFam" id="3.40.225.10:FF:000003">
    <property type="entry name" value="Methylthioribulose-1-phosphate dehydratase"/>
    <property type="match status" value="1"/>
</dbReference>
<dbReference type="Gene3D" id="3.40.225.10">
    <property type="entry name" value="Class II aldolase/adducin N-terminal domain"/>
    <property type="match status" value="1"/>
</dbReference>
<dbReference type="HAMAP" id="MF_03116">
    <property type="entry name" value="Salvage_MtnB_euk"/>
    <property type="match status" value="1"/>
</dbReference>
<dbReference type="InterPro" id="IPR001303">
    <property type="entry name" value="Aldolase_II/adducin_N"/>
</dbReference>
<dbReference type="InterPro" id="IPR036409">
    <property type="entry name" value="Aldolase_II/adducin_N_sf"/>
</dbReference>
<dbReference type="InterPro" id="IPR017714">
    <property type="entry name" value="MethylthioRu-1-P_deHdtase_MtnB"/>
</dbReference>
<dbReference type="InterPro" id="IPR027514">
    <property type="entry name" value="Salvage_MtnB_euk"/>
</dbReference>
<dbReference type="NCBIfam" id="TIGR03328">
    <property type="entry name" value="salvage_mtnB"/>
    <property type="match status" value="1"/>
</dbReference>
<dbReference type="PANTHER" id="PTHR10640">
    <property type="entry name" value="METHYLTHIORIBULOSE-1-PHOSPHATE DEHYDRATASE"/>
    <property type="match status" value="1"/>
</dbReference>
<dbReference type="PANTHER" id="PTHR10640:SF7">
    <property type="entry name" value="METHYLTHIORIBULOSE-1-PHOSPHATE DEHYDRATASE"/>
    <property type="match status" value="1"/>
</dbReference>
<dbReference type="Pfam" id="PF00596">
    <property type="entry name" value="Aldolase_II"/>
    <property type="match status" value="1"/>
</dbReference>
<dbReference type="SMART" id="SM01007">
    <property type="entry name" value="Aldolase_II"/>
    <property type="match status" value="1"/>
</dbReference>
<dbReference type="SUPFAM" id="SSF53639">
    <property type="entry name" value="AraD/HMP-PK domain-like"/>
    <property type="match status" value="1"/>
</dbReference>
<name>MTNB_YEAS7</name>
<sequence>MSSQDVLIHSDDPCHPANLICTLCKQFFHNNWCTGTGGGISIKDPNTNYYYLAPSGVQKEKMTPEDLFVMDAQTLEYLRSPKLYKPSACTPLFLACYQKKDAGAIIHTHSQNAVICSLVFGDEFRIANIEQIKAIPSGKVDPVTKKPMTLSFFDTLKIPIIENMAHEDELIDDLHKTFKDYPDTCAVIVRRHGIFVWGPTIDKAKIFNEAIDYLMELAIKMYQMGIPPDCGIGEEKKHLKMASP</sequence>
<protein>
    <recommendedName>
        <fullName evidence="1">Methylthioribulose-1-phosphate dehydratase</fullName>
        <shortName evidence="1">MTRu-1-P dehydratase</shortName>
        <ecNumber evidence="1">4.2.1.109</ecNumber>
    </recommendedName>
</protein>
<evidence type="ECO:0000255" key="1">
    <source>
        <dbReference type="HAMAP-Rule" id="MF_03116"/>
    </source>
</evidence>
<gene>
    <name evidence="1" type="primary">MDE1</name>
    <name type="ORF">SCY_2950</name>
</gene>
<feature type="chain" id="PRO_0000393849" description="Methylthioribulose-1-phosphate dehydratase">
    <location>
        <begin position="1"/>
        <end position="244"/>
    </location>
</feature>
<feature type="active site" description="Proton donor/acceptor" evidence="1">
    <location>
        <position position="130"/>
    </location>
</feature>
<feature type="binding site" evidence="1">
    <location>
        <position position="89"/>
    </location>
    <ligand>
        <name>substrate</name>
    </ligand>
</feature>
<feature type="binding site" evidence="1">
    <location>
        <position position="107"/>
    </location>
    <ligand>
        <name>Zn(2+)</name>
        <dbReference type="ChEBI" id="CHEBI:29105"/>
    </ligand>
</feature>
<feature type="binding site" evidence="1">
    <location>
        <position position="109"/>
    </location>
    <ligand>
        <name>Zn(2+)</name>
        <dbReference type="ChEBI" id="CHEBI:29105"/>
    </ligand>
</feature>
<feature type="binding site" evidence="1">
    <location>
        <position position="192"/>
    </location>
    <ligand>
        <name>Zn(2+)</name>
        <dbReference type="ChEBI" id="CHEBI:29105"/>
    </ligand>
</feature>
<keyword id="KW-0028">Amino-acid biosynthesis</keyword>
<keyword id="KW-0963">Cytoplasm</keyword>
<keyword id="KW-0456">Lyase</keyword>
<keyword id="KW-0479">Metal-binding</keyword>
<keyword id="KW-0486">Methionine biosynthesis</keyword>
<keyword id="KW-0862">Zinc</keyword>
<proteinExistence type="inferred from homology"/>
<comment type="function">
    <text evidence="1">Catalyzes the dehydration of methylthioribulose-1-phosphate (MTRu-1-P) into 2,3-diketo-5-methylthiopentyl-1-phosphate (DK-MTP-1-P).</text>
</comment>
<comment type="catalytic activity">
    <reaction evidence="1">
        <text>5-(methylsulfanyl)-D-ribulose 1-phosphate = 5-methylsulfanyl-2,3-dioxopentyl phosphate + H2O</text>
        <dbReference type="Rhea" id="RHEA:15549"/>
        <dbReference type="ChEBI" id="CHEBI:15377"/>
        <dbReference type="ChEBI" id="CHEBI:58548"/>
        <dbReference type="ChEBI" id="CHEBI:58828"/>
        <dbReference type="EC" id="4.2.1.109"/>
    </reaction>
</comment>
<comment type="cofactor">
    <cofactor evidence="1">
        <name>Zn(2+)</name>
        <dbReference type="ChEBI" id="CHEBI:29105"/>
    </cofactor>
    <text evidence="1">Binds 1 zinc ion per subunit.</text>
</comment>
<comment type="pathway">
    <text evidence="1">Amino-acid biosynthesis; L-methionine biosynthesis via salvage pathway; L-methionine from S-methyl-5-thio-alpha-D-ribose 1-phosphate: step 2/6.</text>
</comment>
<comment type="subcellular location">
    <subcellularLocation>
        <location evidence="1">Cytoplasm</location>
    </subcellularLocation>
</comment>
<comment type="similarity">
    <text evidence="1">Belongs to the aldolase class II family. MtnB subfamily.</text>
</comment>
<organism>
    <name type="scientific">Saccharomyces cerevisiae (strain YJM789)</name>
    <name type="common">Baker's yeast</name>
    <dbReference type="NCBI Taxonomy" id="307796"/>
    <lineage>
        <taxon>Eukaryota</taxon>
        <taxon>Fungi</taxon>
        <taxon>Dikarya</taxon>
        <taxon>Ascomycota</taxon>
        <taxon>Saccharomycotina</taxon>
        <taxon>Saccharomycetes</taxon>
        <taxon>Saccharomycetales</taxon>
        <taxon>Saccharomycetaceae</taxon>
        <taxon>Saccharomyces</taxon>
    </lineage>
</organism>